<dbReference type="EMBL" id="AE015451">
    <property type="protein sequence ID" value="AAN70305.1"/>
    <property type="molecule type" value="Genomic_DNA"/>
</dbReference>
<dbReference type="RefSeq" id="NP_746841.1">
    <property type="nucleotide sequence ID" value="NC_002947.4"/>
</dbReference>
<dbReference type="RefSeq" id="WP_003249914.1">
    <property type="nucleotide sequence ID" value="NZ_CP169744.1"/>
</dbReference>
<dbReference type="SMR" id="Q88DT6"/>
<dbReference type="STRING" id="160488.PP_4733"/>
<dbReference type="PaxDb" id="160488-PP_4733"/>
<dbReference type="GeneID" id="83682450"/>
<dbReference type="KEGG" id="ppu:PP_4733"/>
<dbReference type="PATRIC" id="fig|160488.4.peg.5045"/>
<dbReference type="eggNOG" id="COG0691">
    <property type="taxonomic scope" value="Bacteria"/>
</dbReference>
<dbReference type="HOGENOM" id="CLU_108953_3_0_6"/>
<dbReference type="OrthoDB" id="9805462at2"/>
<dbReference type="PhylomeDB" id="Q88DT6"/>
<dbReference type="BioCyc" id="PPUT160488:G1G01-5061-MONOMER"/>
<dbReference type="Proteomes" id="UP000000556">
    <property type="component" value="Chromosome"/>
</dbReference>
<dbReference type="GO" id="GO:0005829">
    <property type="term" value="C:cytosol"/>
    <property type="evidence" value="ECO:0007669"/>
    <property type="project" value="TreeGrafter"/>
</dbReference>
<dbReference type="GO" id="GO:0003723">
    <property type="term" value="F:RNA binding"/>
    <property type="evidence" value="ECO:0007669"/>
    <property type="project" value="UniProtKB-UniRule"/>
</dbReference>
<dbReference type="GO" id="GO:0070929">
    <property type="term" value="P:trans-translation"/>
    <property type="evidence" value="ECO:0007669"/>
    <property type="project" value="UniProtKB-UniRule"/>
</dbReference>
<dbReference type="CDD" id="cd09294">
    <property type="entry name" value="SmpB"/>
    <property type="match status" value="1"/>
</dbReference>
<dbReference type="Gene3D" id="2.40.280.10">
    <property type="match status" value="1"/>
</dbReference>
<dbReference type="HAMAP" id="MF_00023">
    <property type="entry name" value="SmpB"/>
    <property type="match status" value="1"/>
</dbReference>
<dbReference type="InterPro" id="IPR023620">
    <property type="entry name" value="SmpB"/>
</dbReference>
<dbReference type="InterPro" id="IPR000037">
    <property type="entry name" value="SsrA-bd_prot"/>
</dbReference>
<dbReference type="InterPro" id="IPR020081">
    <property type="entry name" value="SsrA-bd_prot_CS"/>
</dbReference>
<dbReference type="NCBIfam" id="NF003843">
    <property type="entry name" value="PRK05422.1"/>
    <property type="match status" value="1"/>
</dbReference>
<dbReference type="NCBIfam" id="TIGR00086">
    <property type="entry name" value="smpB"/>
    <property type="match status" value="1"/>
</dbReference>
<dbReference type="PANTHER" id="PTHR30308:SF2">
    <property type="entry name" value="SSRA-BINDING PROTEIN"/>
    <property type="match status" value="1"/>
</dbReference>
<dbReference type="PANTHER" id="PTHR30308">
    <property type="entry name" value="TMRNA-BINDING COMPONENT OF TRANS-TRANSLATION TAGGING COMPLEX"/>
    <property type="match status" value="1"/>
</dbReference>
<dbReference type="Pfam" id="PF01668">
    <property type="entry name" value="SmpB"/>
    <property type="match status" value="1"/>
</dbReference>
<dbReference type="SUPFAM" id="SSF74982">
    <property type="entry name" value="Small protein B (SmpB)"/>
    <property type="match status" value="1"/>
</dbReference>
<dbReference type="PROSITE" id="PS01317">
    <property type="entry name" value="SSRP"/>
    <property type="match status" value="1"/>
</dbReference>
<accession>Q88DT6</accession>
<name>SSRP_PSEPK</name>
<reference key="1">
    <citation type="journal article" date="2002" name="Environ. Microbiol.">
        <title>Complete genome sequence and comparative analysis of the metabolically versatile Pseudomonas putida KT2440.</title>
        <authorList>
            <person name="Nelson K.E."/>
            <person name="Weinel C."/>
            <person name="Paulsen I.T."/>
            <person name="Dodson R.J."/>
            <person name="Hilbert H."/>
            <person name="Martins dos Santos V.A.P."/>
            <person name="Fouts D.E."/>
            <person name="Gill S.R."/>
            <person name="Pop M."/>
            <person name="Holmes M."/>
            <person name="Brinkac L.M."/>
            <person name="Beanan M.J."/>
            <person name="DeBoy R.T."/>
            <person name="Daugherty S.C."/>
            <person name="Kolonay J.F."/>
            <person name="Madupu R."/>
            <person name="Nelson W.C."/>
            <person name="White O."/>
            <person name="Peterson J.D."/>
            <person name="Khouri H.M."/>
            <person name="Hance I."/>
            <person name="Chris Lee P."/>
            <person name="Holtzapple E.K."/>
            <person name="Scanlan D."/>
            <person name="Tran K."/>
            <person name="Moazzez A."/>
            <person name="Utterback T.R."/>
            <person name="Rizzo M."/>
            <person name="Lee K."/>
            <person name="Kosack D."/>
            <person name="Moestl D."/>
            <person name="Wedler H."/>
            <person name="Lauber J."/>
            <person name="Stjepandic D."/>
            <person name="Hoheisel J."/>
            <person name="Straetz M."/>
            <person name="Heim S."/>
            <person name="Kiewitz C."/>
            <person name="Eisen J.A."/>
            <person name="Timmis K.N."/>
            <person name="Duesterhoeft A."/>
            <person name="Tuemmler B."/>
            <person name="Fraser C.M."/>
        </authorList>
    </citation>
    <scope>NUCLEOTIDE SEQUENCE [LARGE SCALE GENOMIC DNA]</scope>
    <source>
        <strain>ATCC 47054 / DSM 6125 / CFBP 8728 / NCIMB 11950 / KT2440</strain>
    </source>
</reference>
<proteinExistence type="inferred from homology"/>
<feature type="chain" id="PRO_0000103009" description="SsrA-binding protein">
    <location>
        <begin position="1"/>
        <end position="160"/>
    </location>
</feature>
<feature type="region of interest" description="Disordered" evidence="2">
    <location>
        <begin position="132"/>
        <end position="160"/>
    </location>
</feature>
<evidence type="ECO:0000255" key="1">
    <source>
        <dbReference type="HAMAP-Rule" id="MF_00023"/>
    </source>
</evidence>
<evidence type="ECO:0000256" key="2">
    <source>
        <dbReference type="SAM" id="MobiDB-lite"/>
    </source>
</evidence>
<gene>
    <name evidence="1" type="primary">smpB</name>
    <name type="ordered locus">PP_4733</name>
</gene>
<sequence length="160" mass="18254">MAKQKKHPTGTIAQNKKARHDYFIEHKFEAGLVLSGWEVKSLRAGKAHLTDSYVLLKDGEAWLFGSHITPLTTASTHVIADPTRTRKLLLNKRELERVEAAVAQKGYTCVALALYWSKHLIKCEIALGKGKKEFDKRDTMRERDSNRELQRAVRNKGKEE</sequence>
<organism>
    <name type="scientific">Pseudomonas putida (strain ATCC 47054 / DSM 6125 / CFBP 8728 / NCIMB 11950 / KT2440)</name>
    <dbReference type="NCBI Taxonomy" id="160488"/>
    <lineage>
        <taxon>Bacteria</taxon>
        <taxon>Pseudomonadati</taxon>
        <taxon>Pseudomonadota</taxon>
        <taxon>Gammaproteobacteria</taxon>
        <taxon>Pseudomonadales</taxon>
        <taxon>Pseudomonadaceae</taxon>
        <taxon>Pseudomonas</taxon>
    </lineage>
</organism>
<protein>
    <recommendedName>
        <fullName evidence="1">SsrA-binding protein</fullName>
    </recommendedName>
    <alternativeName>
        <fullName evidence="1">Small protein B</fullName>
    </alternativeName>
</protein>
<comment type="function">
    <text evidence="1">Required for rescue of stalled ribosomes mediated by trans-translation. Binds to transfer-messenger RNA (tmRNA), required for stable association of tmRNA with ribosomes. tmRNA and SmpB together mimic tRNA shape, replacing the anticodon stem-loop with SmpB. tmRNA is encoded by the ssrA gene; the 2 termini fold to resemble tRNA(Ala) and it encodes a 'tag peptide', a short internal open reading frame. During trans-translation Ala-aminoacylated tmRNA acts like a tRNA, entering the A-site of stalled ribosomes, displacing the stalled mRNA. The ribosome then switches to translate the ORF on the tmRNA; the nascent peptide is terminated with the 'tag peptide' encoded by the tmRNA and targeted for degradation. The ribosome is freed to recommence translation, which seems to be the essential function of trans-translation.</text>
</comment>
<comment type="subcellular location">
    <subcellularLocation>
        <location evidence="1">Cytoplasm</location>
    </subcellularLocation>
    <text evidence="1">The tmRNA-SmpB complex associates with stalled 70S ribosomes.</text>
</comment>
<comment type="similarity">
    <text evidence="1">Belongs to the SmpB family.</text>
</comment>
<keyword id="KW-0963">Cytoplasm</keyword>
<keyword id="KW-1185">Reference proteome</keyword>
<keyword id="KW-0694">RNA-binding</keyword>